<evidence type="ECO:0000255" key="1">
    <source>
        <dbReference type="HAMAP-Rule" id="MF_00186"/>
    </source>
</evidence>
<proteinExistence type="inferred from homology"/>
<dbReference type="EC" id="2.7.1.30" evidence="1"/>
<dbReference type="EMBL" id="CP001401">
    <property type="protein sequence ID" value="ACP54511.1"/>
    <property type="molecule type" value="Genomic_DNA"/>
</dbReference>
<dbReference type="RefSeq" id="WP_012718463.1">
    <property type="nucleotide sequence ID" value="NC_012632.1"/>
</dbReference>
<dbReference type="SMR" id="C3N2M3"/>
<dbReference type="GeneID" id="84058002"/>
<dbReference type="KEGG" id="sim:M1627_0518"/>
<dbReference type="HOGENOM" id="CLU_009281_2_3_2"/>
<dbReference type="UniPathway" id="UPA00618">
    <property type="reaction ID" value="UER00672"/>
</dbReference>
<dbReference type="Proteomes" id="UP000002307">
    <property type="component" value="Chromosome"/>
</dbReference>
<dbReference type="GO" id="GO:0005829">
    <property type="term" value="C:cytosol"/>
    <property type="evidence" value="ECO:0007669"/>
    <property type="project" value="TreeGrafter"/>
</dbReference>
<dbReference type="GO" id="GO:0005524">
    <property type="term" value="F:ATP binding"/>
    <property type="evidence" value="ECO:0007669"/>
    <property type="project" value="UniProtKB-UniRule"/>
</dbReference>
<dbReference type="GO" id="GO:0004370">
    <property type="term" value="F:glycerol kinase activity"/>
    <property type="evidence" value="ECO:0000250"/>
    <property type="project" value="UniProtKB"/>
</dbReference>
<dbReference type="GO" id="GO:0019563">
    <property type="term" value="P:glycerol catabolic process"/>
    <property type="evidence" value="ECO:0007669"/>
    <property type="project" value="UniProtKB-UniRule"/>
</dbReference>
<dbReference type="GO" id="GO:0006071">
    <property type="term" value="P:glycerol metabolic process"/>
    <property type="evidence" value="ECO:0000250"/>
    <property type="project" value="UniProtKB"/>
</dbReference>
<dbReference type="GO" id="GO:0006072">
    <property type="term" value="P:glycerol-3-phosphate metabolic process"/>
    <property type="evidence" value="ECO:0007669"/>
    <property type="project" value="InterPro"/>
</dbReference>
<dbReference type="CDD" id="cd07786">
    <property type="entry name" value="FGGY_EcGK_like"/>
    <property type="match status" value="1"/>
</dbReference>
<dbReference type="FunFam" id="3.30.420.40:FF:000007">
    <property type="entry name" value="Glycerol kinase"/>
    <property type="match status" value="1"/>
</dbReference>
<dbReference type="FunFam" id="3.30.420.40:FF:000008">
    <property type="entry name" value="Glycerol kinase"/>
    <property type="match status" value="1"/>
</dbReference>
<dbReference type="Gene3D" id="3.30.420.40">
    <property type="match status" value="2"/>
</dbReference>
<dbReference type="HAMAP" id="MF_00186">
    <property type="entry name" value="Glycerol_kin"/>
    <property type="match status" value="1"/>
</dbReference>
<dbReference type="InterPro" id="IPR043129">
    <property type="entry name" value="ATPase_NBD"/>
</dbReference>
<dbReference type="InterPro" id="IPR000577">
    <property type="entry name" value="Carb_kinase_FGGY"/>
</dbReference>
<dbReference type="InterPro" id="IPR018483">
    <property type="entry name" value="Carb_kinase_FGGY_CS"/>
</dbReference>
<dbReference type="InterPro" id="IPR018485">
    <property type="entry name" value="FGGY_C"/>
</dbReference>
<dbReference type="InterPro" id="IPR018484">
    <property type="entry name" value="FGGY_N"/>
</dbReference>
<dbReference type="InterPro" id="IPR005999">
    <property type="entry name" value="Glycerol_kin"/>
</dbReference>
<dbReference type="NCBIfam" id="TIGR01311">
    <property type="entry name" value="glycerol_kin"/>
    <property type="match status" value="1"/>
</dbReference>
<dbReference type="NCBIfam" id="NF000756">
    <property type="entry name" value="PRK00047.1"/>
    <property type="match status" value="1"/>
</dbReference>
<dbReference type="PANTHER" id="PTHR10196:SF69">
    <property type="entry name" value="GLYCEROL KINASE"/>
    <property type="match status" value="1"/>
</dbReference>
<dbReference type="PANTHER" id="PTHR10196">
    <property type="entry name" value="SUGAR KINASE"/>
    <property type="match status" value="1"/>
</dbReference>
<dbReference type="Pfam" id="PF02782">
    <property type="entry name" value="FGGY_C"/>
    <property type="match status" value="1"/>
</dbReference>
<dbReference type="Pfam" id="PF00370">
    <property type="entry name" value="FGGY_N"/>
    <property type="match status" value="1"/>
</dbReference>
<dbReference type="PIRSF" id="PIRSF000538">
    <property type="entry name" value="GlpK"/>
    <property type="match status" value="1"/>
</dbReference>
<dbReference type="SUPFAM" id="SSF53067">
    <property type="entry name" value="Actin-like ATPase domain"/>
    <property type="match status" value="2"/>
</dbReference>
<dbReference type="PROSITE" id="PS00933">
    <property type="entry name" value="FGGY_KINASES_1"/>
    <property type="match status" value="1"/>
</dbReference>
<dbReference type="PROSITE" id="PS00445">
    <property type="entry name" value="FGGY_KINASES_2"/>
    <property type="match status" value="1"/>
</dbReference>
<feature type="chain" id="PRO_1000203960" description="Glycerol kinase">
    <location>
        <begin position="1"/>
        <end position="501"/>
    </location>
</feature>
<feature type="binding site" evidence="1">
    <location>
        <position position="16"/>
    </location>
    <ligand>
        <name>ADP</name>
        <dbReference type="ChEBI" id="CHEBI:456216"/>
    </ligand>
</feature>
<feature type="binding site" evidence="1">
    <location>
        <position position="16"/>
    </location>
    <ligand>
        <name>ATP</name>
        <dbReference type="ChEBI" id="CHEBI:30616"/>
    </ligand>
</feature>
<feature type="binding site" evidence="1">
    <location>
        <position position="16"/>
    </location>
    <ligand>
        <name>sn-glycerol 3-phosphate</name>
        <dbReference type="ChEBI" id="CHEBI:57597"/>
    </ligand>
</feature>
<feature type="binding site" evidence="1">
    <location>
        <position position="17"/>
    </location>
    <ligand>
        <name>ATP</name>
        <dbReference type="ChEBI" id="CHEBI:30616"/>
    </ligand>
</feature>
<feature type="binding site" evidence="1">
    <location>
        <position position="18"/>
    </location>
    <ligand>
        <name>ATP</name>
        <dbReference type="ChEBI" id="CHEBI:30616"/>
    </ligand>
</feature>
<feature type="binding site" evidence="1">
    <location>
        <position position="20"/>
    </location>
    <ligand>
        <name>ADP</name>
        <dbReference type="ChEBI" id="CHEBI:456216"/>
    </ligand>
</feature>
<feature type="binding site" evidence="1">
    <location>
        <position position="84"/>
    </location>
    <ligand>
        <name>glycerol</name>
        <dbReference type="ChEBI" id="CHEBI:17754"/>
    </ligand>
</feature>
<feature type="binding site" evidence="1">
    <location>
        <position position="84"/>
    </location>
    <ligand>
        <name>sn-glycerol 3-phosphate</name>
        <dbReference type="ChEBI" id="CHEBI:57597"/>
    </ligand>
</feature>
<feature type="binding site" evidence="1">
    <location>
        <position position="85"/>
    </location>
    <ligand>
        <name>glycerol</name>
        <dbReference type="ChEBI" id="CHEBI:17754"/>
    </ligand>
</feature>
<feature type="binding site" evidence="1">
    <location>
        <position position="85"/>
    </location>
    <ligand>
        <name>sn-glycerol 3-phosphate</name>
        <dbReference type="ChEBI" id="CHEBI:57597"/>
    </ligand>
</feature>
<feature type="binding site" evidence="1">
    <location>
        <position position="135"/>
    </location>
    <ligand>
        <name>glycerol</name>
        <dbReference type="ChEBI" id="CHEBI:17754"/>
    </ligand>
</feature>
<feature type="binding site" evidence="1">
    <location>
        <position position="135"/>
    </location>
    <ligand>
        <name>sn-glycerol 3-phosphate</name>
        <dbReference type="ChEBI" id="CHEBI:57597"/>
    </ligand>
</feature>
<feature type="binding site" evidence="1">
    <location>
        <position position="242"/>
    </location>
    <ligand>
        <name>glycerol</name>
        <dbReference type="ChEBI" id="CHEBI:17754"/>
    </ligand>
</feature>
<feature type="binding site" evidence="1">
    <location>
        <position position="242"/>
    </location>
    <ligand>
        <name>sn-glycerol 3-phosphate</name>
        <dbReference type="ChEBI" id="CHEBI:57597"/>
    </ligand>
</feature>
<feature type="binding site" evidence="1">
    <location>
        <position position="243"/>
    </location>
    <ligand>
        <name>glycerol</name>
        <dbReference type="ChEBI" id="CHEBI:17754"/>
    </ligand>
</feature>
<feature type="binding site" evidence="1">
    <location>
        <position position="264"/>
    </location>
    <ligand>
        <name>ADP</name>
        <dbReference type="ChEBI" id="CHEBI:456216"/>
    </ligand>
</feature>
<feature type="binding site" evidence="1">
    <location>
        <position position="264"/>
    </location>
    <ligand>
        <name>ATP</name>
        <dbReference type="ChEBI" id="CHEBI:30616"/>
    </ligand>
</feature>
<feature type="binding site" evidence="1">
    <location>
        <position position="307"/>
    </location>
    <ligand>
        <name>ADP</name>
        <dbReference type="ChEBI" id="CHEBI:456216"/>
    </ligand>
</feature>
<feature type="binding site" evidence="1">
    <location>
        <position position="307"/>
    </location>
    <ligand>
        <name>ATP</name>
        <dbReference type="ChEBI" id="CHEBI:30616"/>
    </ligand>
</feature>
<feature type="binding site" evidence="1">
    <location>
        <position position="311"/>
    </location>
    <ligand>
        <name>ATP</name>
        <dbReference type="ChEBI" id="CHEBI:30616"/>
    </ligand>
</feature>
<feature type="binding site" evidence="1">
    <location>
        <position position="408"/>
    </location>
    <ligand>
        <name>ADP</name>
        <dbReference type="ChEBI" id="CHEBI:456216"/>
    </ligand>
</feature>
<feature type="binding site" evidence="1">
    <location>
        <position position="408"/>
    </location>
    <ligand>
        <name>ATP</name>
        <dbReference type="ChEBI" id="CHEBI:30616"/>
    </ligand>
</feature>
<comment type="function">
    <text evidence="1">Key enzyme in the regulation of glycerol uptake and metabolism. Catalyzes the phosphorylation of glycerol to yield sn-glycerol 3-phosphate.</text>
</comment>
<comment type="catalytic activity">
    <reaction evidence="1">
        <text>glycerol + ATP = sn-glycerol 3-phosphate + ADP + H(+)</text>
        <dbReference type="Rhea" id="RHEA:21644"/>
        <dbReference type="ChEBI" id="CHEBI:15378"/>
        <dbReference type="ChEBI" id="CHEBI:17754"/>
        <dbReference type="ChEBI" id="CHEBI:30616"/>
        <dbReference type="ChEBI" id="CHEBI:57597"/>
        <dbReference type="ChEBI" id="CHEBI:456216"/>
        <dbReference type="EC" id="2.7.1.30"/>
    </reaction>
</comment>
<comment type="pathway">
    <text evidence="1">Polyol metabolism; glycerol degradation via glycerol kinase pathway; sn-glycerol 3-phosphate from glycerol: step 1/1.</text>
</comment>
<comment type="similarity">
    <text evidence="1">Belongs to the FGGY kinase family.</text>
</comment>
<reference key="1">
    <citation type="journal article" date="2009" name="Proc. Natl. Acad. Sci. U.S.A.">
        <title>Biogeography of the Sulfolobus islandicus pan-genome.</title>
        <authorList>
            <person name="Reno M.L."/>
            <person name="Held N.L."/>
            <person name="Fields C.J."/>
            <person name="Burke P.V."/>
            <person name="Whitaker R.J."/>
        </authorList>
    </citation>
    <scope>NUCLEOTIDE SEQUENCE [LARGE SCALE GENOMIC DNA]</scope>
    <source>
        <strain>M.16.27</strain>
    </source>
</reference>
<name>GLPK_SACI3</name>
<sequence length="501" mass="55758">MNTMSHKFVLALDEGTTSARAILFDSDLNIVNIGQYEFPQHYPQPGYVEHDPEEIWEAQMLAVKKAISKIDAKQIVAIGITNQRETTVLWDAKSGKPVYNAIVWQDRRTSPITDWLKANYFKMIKDKTGLVPDPYFSASKIKWILDNVSNVREKAERGEIKFGTIDTYLIWRLTNGKAHVTDYSNASRTMLFNINKLEWDREILELLKIPESILPEVKPSSEIYGYSEALGNLIPISGDAGDQQAALFGQVAFNVGEIKATYGTGSFILMNIGNNPIRSENLLTTIAWGLEKNKAKYALEGSIFITGAAVQWFRDGLRAIDVSDEIEPLASSVEDNGGVYFVPAFVGLGAPYWDPYARGLIIGITRGTTKAHIARAILESMAYQTRDVIEVMQKESSISINSLKVDGGAAKDNLLMQFQADIIGIKVIRPKVMETTSMGVAMLAGLGVGLWNSLEELRSIWKVDKEFIPSMSEEKRRALYSGWKEAVKRAMGWAKVVGGQV</sequence>
<keyword id="KW-0067">ATP-binding</keyword>
<keyword id="KW-0319">Glycerol metabolism</keyword>
<keyword id="KW-0418">Kinase</keyword>
<keyword id="KW-0547">Nucleotide-binding</keyword>
<keyword id="KW-0808">Transferase</keyword>
<accession>C3N2M3</accession>
<protein>
    <recommendedName>
        <fullName evidence="1">Glycerol kinase</fullName>
        <ecNumber evidence="1">2.7.1.30</ecNumber>
    </recommendedName>
    <alternativeName>
        <fullName evidence="1">ATP:glycerol 3-phosphotransferase</fullName>
    </alternativeName>
    <alternativeName>
        <fullName evidence="1">Glycerokinase</fullName>
        <shortName evidence="1">GK</shortName>
    </alternativeName>
</protein>
<organism>
    <name type="scientific">Saccharolobus islandicus (strain M.16.27)</name>
    <name type="common">Sulfolobus islandicus</name>
    <dbReference type="NCBI Taxonomy" id="427318"/>
    <lineage>
        <taxon>Archaea</taxon>
        <taxon>Thermoproteota</taxon>
        <taxon>Thermoprotei</taxon>
        <taxon>Sulfolobales</taxon>
        <taxon>Sulfolobaceae</taxon>
        <taxon>Saccharolobus</taxon>
    </lineage>
</organism>
<gene>
    <name evidence="1" type="primary">glpK</name>
    <name type="ordered locus">M1627_0518</name>
</gene>